<name>KATG_CROS8</name>
<evidence type="ECO:0000255" key="1">
    <source>
        <dbReference type="HAMAP-Rule" id="MF_01961"/>
    </source>
</evidence>
<evidence type="ECO:0000256" key="2">
    <source>
        <dbReference type="SAM" id="MobiDB-lite"/>
    </source>
</evidence>
<dbReference type="EC" id="1.11.1.21" evidence="1"/>
<dbReference type="EMBL" id="CP000783">
    <property type="protein sequence ID" value="ABU75677.1"/>
    <property type="molecule type" value="Genomic_DNA"/>
</dbReference>
<dbReference type="RefSeq" id="WP_012123821.1">
    <property type="nucleotide sequence ID" value="NC_009778.1"/>
</dbReference>
<dbReference type="SMR" id="A7MJS4"/>
<dbReference type="KEGG" id="esa:ESA_00379"/>
<dbReference type="PATRIC" id="fig|290339.8.peg.341"/>
<dbReference type="HOGENOM" id="CLU_025424_2_0_6"/>
<dbReference type="Proteomes" id="UP000000260">
    <property type="component" value="Chromosome"/>
</dbReference>
<dbReference type="GO" id="GO:0005829">
    <property type="term" value="C:cytosol"/>
    <property type="evidence" value="ECO:0007669"/>
    <property type="project" value="TreeGrafter"/>
</dbReference>
<dbReference type="GO" id="GO:0004096">
    <property type="term" value="F:catalase activity"/>
    <property type="evidence" value="ECO:0007669"/>
    <property type="project" value="UniProtKB-UniRule"/>
</dbReference>
<dbReference type="GO" id="GO:0020037">
    <property type="term" value="F:heme binding"/>
    <property type="evidence" value="ECO:0007669"/>
    <property type="project" value="InterPro"/>
</dbReference>
<dbReference type="GO" id="GO:0046872">
    <property type="term" value="F:metal ion binding"/>
    <property type="evidence" value="ECO:0007669"/>
    <property type="project" value="UniProtKB-KW"/>
</dbReference>
<dbReference type="GO" id="GO:0070301">
    <property type="term" value="P:cellular response to hydrogen peroxide"/>
    <property type="evidence" value="ECO:0007669"/>
    <property type="project" value="TreeGrafter"/>
</dbReference>
<dbReference type="GO" id="GO:0042744">
    <property type="term" value="P:hydrogen peroxide catabolic process"/>
    <property type="evidence" value="ECO:0007669"/>
    <property type="project" value="UniProtKB-KW"/>
</dbReference>
<dbReference type="CDD" id="cd08200">
    <property type="entry name" value="catalase_peroxidase_2"/>
    <property type="match status" value="1"/>
</dbReference>
<dbReference type="FunFam" id="1.10.420.10:FF:000002">
    <property type="entry name" value="Catalase-peroxidase"/>
    <property type="match status" value="1"/>
</dbReference>
<dbReference type="FunFam" id="1.10.420.10:FF:000004">
    <property type="entry name" value="Catalase-peroxidase"/>
    <property type="match status" value="1"/>
</dbReference>
<dbReference type="FunFam" id="1.10.520.10:FF:000002">
    <property type="entry name" value="Catalase-peroxidase"/>
    <property type="match status" value="1"/>
</dbReference>
<dbReference type="Gene3D" id="1.10.520.10">
    <property type="match status" value="2"/>
</dbReference>
<dbReference type="Gene3D" id="1.10.420.10">
    <property type="entry name" value="Peroxidase, domain 2"/>
    <property type="match status" value="2"/>
</dbReference>
<dbReference type="HAMAP" id="MF_01961">
    <property type="entry name" value="Catal_peroxid"/>
    <property type="match status" value="1"/>
</dbReference>
<dbReference type="InterPro" id="IPR000763">
    <property type="entry name" value="Catalase_peroxidase"/>
</dbReference>
<dbReference type="InterPro" id="IPR002016">
    <property type="entry name" value="Haem_peroxidase"/>
</dbReference>
<dbReference type="InterPro" id="IPR010255">
    <property type="entry name" value="Haem_peroxidase_sf"/>
</dbReference>
<dbReference type="InterPro" id="IPR019794">
    <property type="entry name" value="Peroxidases_AS"/>
</dbReference>
<dbReference type="InterPro" id="IPR019793">
    <property type="entry name" value="Peroxidases_heam-ligand_BS"/>
</dbReference>
<dbReference type="NCBIfam" id="TIGR00198">
    <property type="entry name" value="cat_per_HPI"/>
    <property type="match status" value="1"/>
</dbReference>
<dbReference type="NCBIfam" id="NF011635">
    <property type="entry name" value="PRK15061.1"/>
    <property type="match status" value="1"/>
</dbReference>
<dbReference type="PANTHER" id="PTHR30555:SF0">
    <property type="entry name" value="CATALASE-PEROXIDASE"/>
    <property type="match status" value="1"/>
</dbReference>
<dbReference type="PANTHER" id="PTHR30555">
    <property type="entry name" value="HYDROPEROXIDASE I, BIFUNCTIONAL CATALASE-PEROXIDASE"/>
    <property type="match status" value="1"/>
</dbReference>
<dbReference type="Pfam" id="PF00141">
    <property type="entry name" value="peroxidase"/>
    <property type="match status" value="2"/>
</dbReference>
<dbReference type="PRINTS" id="PR00460">
    <property type="entry name" value="BPEROXIDASE"/>
</dbReference>
<dbReference type="PRINTS" id="PR00458">
    <property type="entry name" value="PEROXIDASE"/>
</dbReference>
<dbReference type="SUPFAM" id="SSF48113">
    <property type="entry name" value="Heme-dependent peroxidases"/>
    <property type="match status" value="2"/>
</dbReference>
<dbReference type="PROSITE" id="PS00435">
    <property type="entry name" value="PEROXIDASE_1"/>
    <property type="match status" value="1"/>
</dbReference>
<dbReference type="PROSITE" id="PS00436">
    <property type="entry name" value="PEROXIDASE_2"/>
    <property type="match status" value="1"/>
</dbReference>
<dbReference type="PROSITE" id="PS50873">
    <property type="entry name" value="PEROXIDASE_4"/>
    <property type="match status" value="2"/>
</dbReference>
<comment type="function">
    <text evidence="1">Bifunctional enzyme with both catalase and broad-spectrum peroxidase activity.</text>
</comment>
<comment type="catalytic activity">
    <reaction evidence="1">
        <text>H2O2 + AH2 = A + 2 H2O</text>
        <dbReference type="Rhea" id="RHEA:30275"/>
        <dbReference type="ChEBI" id="CHEBI:13193"/>
        <dbReference type="ChEBI" id="CHEBI:15377"/>
        <dbReference type="ChEBI" id="CHEBI:16240"/>
        <dbReference type="ChEBI" id="CHEBI:17499"/>
        <dbReference type="EC" id="1.11.1.21"/>
    </reaction>
</comment>
<comment type="catalytic activity">
    <reaction evidence="1">
        <text>2 H2O2 = O2 + 2 H2O</text>
        <dbReference type="Rhea" id="RHEA:20309"/>
        <dbReference type="ChEBI" id="CHEBI:15377"/>
        <dbReference type="ChEBI" id="CHEBI:15379"/>
        <dbReference type="ChEBI" id="CHEBI:16240"/>
        <dbReference type="EC" id="1.11.1.21"/>
    </reaction>
</comment>
<comment type="cofactor">
    <cofactor evidence="1">
        <name>heme b</name>
        <dbReference type="ChEBI" id="CHEBI:60344"/>
    </cofactor>
    <text evidence="1">Binds 1 heme b (iron(II)-protoporphyrin IX) group per dimer.</text>
</comment>
<comment type="subunit">
    <text evidence="1">Homodimer or homotetramer.</text>
</comment>
<comment type="PTM">
    <text evidence="1">Formation of the three residue Trp-Tyr-Met cross-link is important for the catalase, but not the peroxidase activity of the enzyme.</text>
</comment>
<comment type="similarity">
    <text evidence="1">Belongs to the peroxidase family. Peroxidase/catalase subfamily.</text>
</comment>
<feature type="chain" id="PRO_0000354771" description="Catalase-peroxidase">
    <location>
        <begin position="1"/>
        <end position="726"/>
    </location>
</feature>
<feature type="region of interest" description="Disordered" evidence="2">
    <location>
        <begin position="1"/>
        <end position="34"/>
    </location>
</feature>
<feature type="compositionally biased region" description="Polar residues" evidence="2">
    <location>
        <begin position="1"/>
        <end position="12"/>
    </location>
</feature>
<feature type="active site" description="Proton acceptor" evidence="1">
    <location>
        <position position="106"/>
    </location>
</feature>
<feature type="binding site" description="axial binding residue" evidence="1">
    <location>
        <position position="267"/>
    </location>
    <ligand>
        <name>heme b</name>
        <dbReference type="ChEBI" id="CHEBI:60344"/>
    </ligand>
    <ligandPart>
        <name>Fe</name>
        <dbReference type="ChEBI" id="CHEBI:18248"/>
    </ligandPart>
</feature>
<feature type="site" description="Transition state stabilizer" evidence="1">
    <location>
        <position position="102"/>
    </location>
</feature>
<feature type="cross-link" description="Tryptophyl-tyrosyl-methioninium (Trp-Tyr) (with M-252)" evidence="1">
    <location>
        <begin position="105"/>
        <end position="226"/>
    </location>
</feature>
<feature type="cross-link" description="Tryptophyl-tyrosyl-methioninium (Tyr-Met) (with W-105)" evidence="1">
    <location>
        <begin position="226"/>
        <end position="252"/>
    </location>
</feature>
<protein>
    <recommendedName>
        <fullName evidence="1">Catalase-peroxidase</fullName>
        <shortName evidence="1">CP</shortName>
        <ecNumber evidence="1">1.11.1.21</ecNumber>
    </recommendedName>
    <alternativeName>
        <fullName evidence="1">Peroxidase/catalase</fullName>
    </alternativeName>
</protein>
<organism>
    <name type="scientific">Cronobacter sakazakii (strain ATCC BAA-894)</name>
    <name type="common">Enterobacter sakazakii</name>
    <dbReference type="NCBI Taxonomy" id="290339"/>
    <lineage>
        <taxon>Bacteria</taxon>
        <taxon>Pseudomonadati</taxon>
        <taxon>Pseudomonadota</taxon>
        <taxon>Gammaproteobacteria</taxon>
        <taxon>Enterobacterales</taxon>
        <taxon>Enterobacteriaceae</taxon>
        <taxon>Cronobacter</taxon>
    </lineage>
</organism>
<gene>
    <name evidence="1" type="primary">katG</name>
    <name type="ordered locus">ESA_00379</name>
</gene>
<keyword id="KW-0349">Heme</keyword>
<keyword id="KW-0376">Hydrogen peroxide</keyword>
<keyword id="KW-0408">Iron</keyword>
<keyword id="KW-0479">Metal-binding</keyword>
<keyword id="KW-0560">Oxidoreductase</keyword>
<keyword id="KW-0575">Peroxidase</keyword>
<keyword id="KW-1185">Reference proteome</keyword>
<reference key="1">
    <citation type="journal article" date="2010" name="PLoS ONE">
        <title>Genome sequence of Cronobacter sakazakii BAA-894 and comparative genomic hybridization analysis with other Cronobacter species.</title>
        <authorList>
            <person name="Kucerova E."/>
            <person name="Clifton S.W."/>
            <person name="Xia X.Q."/>
            <person name="Long F."/>
            <person name="Porwollik S."/>
            <person name="Fulton L."/>
            <person name="Fronick C."/>
            <person name="Minx P."/>
            <person name="Kyung K."/>
            <person name="Warren W."/>
            <person name="Fulton R."/>
            <person name="Feng D."/>
            <person name="Wollam A."/>
            <person name="Shah N."/>
            <person name="Bhonagiri V."/>
            <person name="Nash W.E."/>
            <person name="Hallsworth-Pepin K."/>
            <person name="Wilson R.K."/>
            <person name="McClelland M."/>
            <person name="Forsythe S.J."/>
        </authorList>
    </citation>
    <scope>NUCLEOTIDE SEQUENCE [LARGE SCALE GENOMIC DNA]</scope>
    <source>
        <strain>ATCC BAA-894</strain>
    </source>
</reference>
<sequence>MSTPSDQHNTLSAGKCPFHQGNSNQTAGGGTSSRDWWPNQLRVELLAQHSNRTNPLGDDFNYRKAFSELDYAALKADLKALLTDSQPWWPADWGSYTGLFIRMAWHSAGTYRSADGRGGAGRGQQRFAPLNSWPDNVSLDKARRLLWPVKQKYGQKISWADLFILAGNVALENSGFRTFGFGAGREDVWEPDMDVNWGDEKNWLEHRHPESLAQAPLGATEMGLIYVNPEGPNHSGDPASAAPAIRATFGNMGMNDEETVALIAGGHTLGKTHGAAAANHVGVDPEAAPIEAQGLGWHSSFGSGAGADAITSGLEVTWTQTPTQWSNYFFENLFKYEWVQTRSPAGAIQFEAVDAPEIIPDPFDPSKKRKPTMLVTDLTLRFDPEFEKISRRFLNDPQAFNEAFARAWYKLTHRDMGPKARYIGPEVPKEDLIWQDPLPAAIYQPTQADIDSLKAEIASAGLTVSELISVAWASASTFRGGDKRGGANGARLALAPQRDWDVNASAARALATLEAIQRTANKASLADIIVLAGVVGVEQAAKAAGVEITVPFAPGRVDARQDQTDVALFEFLKPKADGFRNYRGVRSSTPTESLLIDKAQQLTLTAPELTVLVGGMRALGANYDASAHGVFTDRVGVLSTDFFVNLLDMRYEWKATDATAEVFEGRDRESGEVKYTATRADLVFGSNSVLRSFAEVYASQDAHEKFVKDFVAAWTKVMNLDRFDIQ</sequence>
<proteinExistence type="inferred from homology"/>
<accession>A7MJS4</accession>